<organism>
    <name type="scientific">Bacillus cereus (strain ATCC 14579 / DSM 31 / CCUG 7414 / JCM 2152 / NBRC 15305 / NCIMB 9373 / NCTC 2599 / NRRL B-3711)</name>
    <dbReference type="NCBI Taxonomy" id="226900"/>
    <lineage>
        <taxon>Bacteria</taxon>
        <taxon>Bacillati</taxon>
        <taxon>Bacillota</taxon>
        <taxon>Bacilli</taxon>
        <taxon>Bacillales</taxon>
        <taxon>Bacillaceae</taxon>
        <taxon>Bacillus</taxon>
        <taxon>Bacillus cereus group</taxon>
    </lineage>
</organism>
<name>MTNB_BACCR</name>
<comment type="function">
    <text evidence="1">Catalyzes the dehydration of methylthioribulose-1-phosphate (MTRu-1-P) into 2,3-diketo-5-methylthiopentyl-1-phosphate (DK-MTP-1-P).</text>
</comment>
<comment type="catalytic activity">
    <reaction evidence="1">
        <text>5-(methylsulfanyl)-D-ribulose 1-phosphate = 5-methylsulfanyl-2,3-dioxopentyl phosphate + H2O</text>
        <dbReference type="Rhea" id="RHEA:15549"/>
        <dbReference type="ChEBI" id="CHEBI:15377"/>
        <dbReference type="ChEBI" id="CHEBI:58548"/>
        <dbReference type="ChEBI" id="CHEBI:58828"/>
        <dbReference type="EC" id="4.2.1.109"/>
    </reaction>
</comment>
<comment type="cofactor">
    <cofactor evidence="1">
        <name>Zn(2+)</name>
        <dbReference type="ChEBI" id="CHEBI:29105"/>
    </cofactor>
    <text evidence="1">Binds 1 zinc ion per subunit.</text>
</comment>
<comment type="pathway">
    <text evidence="1">Amino-acid biosynthesis; L-methionine biosynthesis via salvage pathway; L-methionine from S-methyl-5-thio-alpha-D-ribose 1-phosphate: step 2/6.</text>
</comment>
<comment type="subunit">
    <text evidence="1">Homotetramer.</text>
</comment>
<comment type="similarity">
    <text evidence="1">Belongs to the aldolase class II family. MtnB subfamily.</text>
</comment>
<reference key="1">
    <citation type="journal article" date="2003" name="Nature">
        <title>Genome sequence of Bacillus cereus and comparative analysis with Bacillus anthracis.</title>
        <authorList>
            <person name="Ivanova N."/>
            <person name="Sorokin A."/>
            <person name="Anderson I."/>
            <person name="Galleron N."/>
            <person name="Candelon B."/>
            <person name="Kapatral V."/>
            <person name="Bhattacharyya A."/>
            <person name="Reznik G."/>
            <person name="Mikhailova N."/>
            <person name="Lapidus A."/>
            <person name="Chu L."/>
            <person name="Mazur M."/>
            <person name="Goltsman E."/>
            <person name="Larsen N."/>
            <person name="D'Souza M."/>
            <person name="Walunas T."/>
            <person name="Grechkin Y."/>
            <person name="Pusch G."/>
            <person name="Haselkorn R."/>
            <person name="Fonstein M."/>
            <person name="Ehrlich S.D."/>
            <person name="Overbeek R."/>
            <person name="Kyrpides N.C."/>
        </authorList>
    </citation>
    <scope>NUCLEOTIDE SEQUENCE [LARGE SCALE GENOMIC DNA]</scope>
    <source>
        <strain>ATCC 14579 / DSM 31 / CCUG 7414 / JCM 2152 / NBRC 15305 / NCIMB 9373 / NCTC 2599 / NRRL B-3711</strain>
    </source>
</reference>
<feature type="chain" id="PRO_0000357065" description="Methylthioribulose-1-phosphate dehydratase">
    <location>
        <begin position="1"/>
        <end position="212"/>
    </location>
</feature>
<feature type="binding site" evidence="1">
    <location>
        <position position="97"/>
    </location>
    <ligand>
        <name>Zn(2+)</name>
        <dbReference type="ChEBI" id="CHEBI:29105"/>
    </ligand>
</feature>
<feature type="binding site" evidence="1">
    <location>
        <position position="99"/>
    </location>
    <ligand>
        <name>Zn(2+)</name>
        <dbReference type="ChEBI" id="CHEBI:29105"/>
    </ligand>
</feature>
<accession>Q819E6</accession>
<gene>
    <name evidence="1" type="primary">mtnB</name>
    <name type="ordered locus">BC_4038</name>
</gene>
<keyword id="KW-0028">Amino-acid biosynthesis</keyword>
<keyword id="KW-0456">Lyase</keyword>
<keyword id="KW-0479">Metal-binding</keyword>
<keyword id="KW-0486">Methionine biosynthesis</keyword>
<keyword id="KW-1185">Reference proteome</keyword>
<keyword id="KW-0862">Zinc</keyword>
<protein>
    <recommendedName>
        <fullName evidence="1">Methylthioribulose-1-phosphate dehydratase</fullName>
        <shortName evidence="1">MTRu-1-P dehydratase</shortName>
        <ecNumber evidence="1">4.2.1.109</ecNumber>
    </recommendedName>
</protein>
<sequence length="212" mass="23897">MKQLFRQWYDLSEIKKELTTRNWFPATSGNISIKVSHEPLTFLITASGKDKTKTTPDDFLLVDHVGVPVLETELRPSAETILHTHIYNNTNAGCVLHVHTTDNNVITNLYSDAVTLQNQEIIKALDIWEEGATIHIPIIENHAHIPTLGENFRKHIQGDSGAVLIRNHGITVWGRDSFDAKKRLEAYEFLFQFHIKLLSIQGGVSNGANSYS</sequence>
<dbReference type="EC" id="4.2.1.109" evidence="1"/>
<dbReference type="EMBL" id="AE016877">
    <property type="protein sequence ID" value="AAP10957.1"/>
    <property type="molecule type" value="Genomic_DNA"/>
</dbReference>
<dbReference type="RefSeq" id="NP_833756.1">
    <property type="nucleotide sequence ID" value="NC_004722.1"/>
</dbReference>
<dbReference type="RefSeq" id="WP_000811341.1">
    <property type="nucleotide sequence ID" value="NZ_CP138336.1"/>
</dbReference>
<dbReference type="SMR" id="Q819E6"/>
<dbReference type="STRING" id="226900.BC_4038"/>
<dbReference type="KEGG" id="bce:BC4038"/>
<dbReference type="PATRIC" id="fig|226900.8.peg.4169"/>
<dbReference type="HOGENOM" id="CLU_006033_4_1_9"/>
<dbReference type="OrthoDB" id="9805559at2"/>
<dbReference type="UniPathway" id="UPA00904">
    <property type="reaction ID" value="UER00875"/>
</dbReference>
<dbReference type="Proteomes" id="UP000001417">
    <property type="component" value="Chromosome"/>
</dbReference>
<dbReference type="GO" id="GO:0005737">
    <property type="term" value="C:cytoplasm"/>
    <property type="evidence" value="ECO:0000318"/>
    <property type="project" value="GO_Central"/>
</dbReference>
<dbReference type="GO" id="GO:0046570">
    <property type="term" value="F:methylthioribulose 1-phosphate dehydratase activity"/>
    <property type="evidence" value="ECO:0000318"/>
    <property type="project" value="GO_Central"/>
</dbReference>
<dbReference type="GO" id="GO:0008270">
    <property type="term" value="F:zinc ion binding"/>
    <property type="evidence" value="ECO:0007669"/>
    <property type="project" value="UniProtKB-UniRule"/>
</dbReference>
<dbReference type="GO" id="GO:0019509">
    <property type="term" value="P:L-methionine salvage from methylthioadenosine"/>
    <property type="evidence" value="ECO:0000318"/>
    <property type="project" value="GO_Central"/>
</dbReference>
<dbReference type="FunFam" id="3.40.225.10:FF:000007">
    <property type="entry name" value="Methylthioribulose-1-phosphate dehydratase"/>
    <property type="match status" value="1"/>
</dbReference>
<dbReference type="Gene3D" id="3.40.225.10">
    <property type="entry name" value="Class II aldolase/adducin N-terminal domain"/>
    <property type="match status" value="1"/>
</dbReference>
<dbReference type="HAMAP" id="MF_01677">
    <property type="entry name" value="Salvage_MtnB"/>
    <property type="match status" value="1"/>
</dbReference>
<dbReference type="InterPro" id="IPR001303">
    <property type="entry name" value="Aldolase_II/adducin_N"/>
</dbReference>
<dbReference type="InterPro" id="IPR036409">
    <property type="entry name" value="Aldolase_II/adducin_N_sf"/>
</dbReference>
<dbReference type="InterPro" id="IPR017714">
    <property type="entry name" value="MethylthioRu-1-P_deHdtase_MtnB"/>
</dbReference>
<dbReference type="NCBIfam" id="NF005244">
    <property type="entry name" value="PRK06754.1"/>
    <property type="match status" value="1"/>
</dbReference>
<dbReference type="NCBIfam" id="TIGR03328">
    <property type="entry name" value="salvage_mtnB"/>
    <property type="match status" value="1"/>
</dbReference>
<dbReference type="PANTHER" id="PTHR10640">
    <property type="entry name" value="METHYLTHIORIBULOSE-1-PHOSPHATE DEHYDRATASE"/>
    <property type="match status" value="1"/>
</dbReference>
<dbReference type="PANTHER" id="PTHR10640:SF7">
    <property type="entry name" value="METHYLTHIORIBULOSE-1-PHOSPHATE DEHYDRATASE"/>
    <property type="match status" value="1"/>
</dbReference>
<dbReference type="Pfam" id="PF00596">
    <property type="entry name" value="Aldolase_II"/>
    <property type="match status" value="1"/>
</dbReference>
<dbReference type="SMART" id="SM01007">
    <property type="entry name" value="Aldolase_II"/>
    <property type="match status" value="1"/>
</dbReference>
<dbReference type="SUPFAM" id="SSF53639">
    <property type="entry name" value="AraD/HMP-PK domain-like"/>
    <property type="match status" value="1"/>
</dbReference>
<evidence type="ECO:0000255" key="1">
    <source>
        <dbReference type="HAMAP-Rule" id="MF_01677"/>
    </source>
</evidence>
<proteinExistence type="inferred from homology"/>